<gene>
    <name evidence="1" type="primary">rsgA</name>
    <name type="ordered locus">PA14_65420</name>
</gene>
<comment type="function">
    <text evidence="1">One of several proteins that assist in the late maturation steps of the functional core of the 30S ribosomal subunit. Helps release RbfA from mature subunits. May play a role in the assembly of ribosomal proteins into the subunit. Circularly permuted GTPase that catalyzes slow GTP hydrolysis, GTPase activity is stimulated by the 30S ribosomal subunit.</text>
</comment>
<comment type="cofactor">
    <cofactor evidence="1">
        <name>Zn(2+)</name>
        <dbReference type="ChEBI" id="CHEBI:29105"/>
    </cofactor>
    <text evidence="1">Binds 1 zinc ion per subunit.</text>
</comment>
<comment type="subunit">
    <text evidence="1">Monomer. Associates with 30S ribosomal subunit, binds 16S rRNA.</text>
</comment>
<comment type="subcellular location">
    <subcellularLocation>
        <location evidence="1">Cytoplasm</location>
    </subcellularLocation>
</comment>
<comment type="similarity">
    <text evidence="1">Belongs to the TRAFAC class YlqF/YawG GTPase family. RsgA subfamily.</text>
</comment>
<sequence>MAKRHLTRRQSWRIEKIQEERAARAARRELRAVDELEGGDLGPEQTGQVIAHFGVQVEVESADGQVSRCHLRANLPALVTGDQVVWRAGNQGIGVIVAQLPRRSELCRPDMRGLLKPVAANVDRIVIVFAPRPEPHANLIDRYLIAAEHAGIQPLLLLNKADLVDESNAEGIDALLNVYRTLGYPLIEVSAFNGLAMDELRGALDGHVSVFVGQSGVGKSSLVNALLPGVDTRVGDLSTVTGKGTHTTTTARLFHFPGGGDLIDSPGIREFGLGHVSRDDVEAGFIEFRDLLGHCRFRDCKHDREPGCALLQALEDGRIMPQRMASYRHILASMPETDY</sequence>
<accession>Q02F66</accession>
<evidence type="ECO:0000255" key="1">
    <source>
        <dbReference type="HAMAP-Rule" id="MF_01820"/>
    </source>
</evidence>
<evidence type="ECO:0000255" key="2">
    <source>
        <dbReference type="PROSITE-ProRule" id="PRU01058"/>
    </source>
</evidence>
<keyword id="KW-0963">Cytoplasm</keyword>
<keyword id="KW-0342">GTP-binding</keyword>
<keyword id="KW-0378">Hydrolase</keyword>
<keyword id="KW-0479">Metal-binding</keyword>
<keyword id="KW-0547">Nucleotide-binding</keyword>
<keyword id="KW-0690">Ribosome biogenesis</keyword>
<keyword id="KW-0694">RNA-binding</keyword>
<keyword id="KW-0699">rRNA-binding</keyword>
<keyword id="KW-0862">Zinc</keyword>
<organism>
    <name type="scientific">Pseudomonas aeruginosa (strain UCBPP-PA14)</name>
    <dbReference type="NCBI Taxonomy" id="208963"/>
    <lineage>
        <taxon>Bacteria</taxon>
        <taxon>Pseudomonadati</taxon>
        <taxon>Pseudomonadota</taxon>
        <taxon>Gammaproteobacteria</taxon>
        <taxon>Pseudomonadales</taxon>
        <taxon>Pseudomonadaceae</taxon>
        <taxon>Pseudomonas</taxon>
    </lineage>
</organism>
<reference key="1">
    <citation type="journal article" date="2006" name="Genome Biol.">
        <title>Genomic analysis reveals that Pseudomonas aeruginosa virulence is combinatorial.</title>
        <authorList>
            <person name="Lee D.G."/>
            <person name="Urbach J.M."/>
            <person name="Wu G."/>
            <person name="Liberati N.T."/>
            <person name="Feinbaum R.L."/>
            <person name="Miyata S."/>
            <person name="Diggins L.T."/>
            <person name="He J."/>
            <person name="Saucier M."/>
            <person name="Deziel E."/>
            <person name="Friedman L."/>
            <person name="Li L."/>
            <person name="Grills G."/>
            <person name="Montgomery K."/>
            <person name="Kucherlapati R."/>
            <person name="Rahme L.G."/>
            <person name="Ausubel F.M."/>
        </authorList>
    </citation>
    <scope>NUCLEOTIDE SEQUENCE [LARGE SCALE GENOMIC DNA]</scope>
    <source>
        <strain>UCBPP-PA14</strain>
    </source>
</reference>
<dbReference type="EC" id="3.6.1.-" evidence="1"/>
<dbReference type="EMBL" id="CP000438">
    <property type="protein sequence ID" value="ABJ14337.1"/>
    <property type="molecule type" value="Genomic_DNA"/>
</dbReference>
<dbReference type="RefSeq" id="WP_003141723.1">
    <property type="nucleotide sequence ID" value="NZ_CP034244.1"/>
</dbReference>
<dbReference type="SMR" id="Q02F66"/>
<dbReference type="KEGG" id="pau:PA14_65420"/>
<dbReference type="PseudoCAP" id="PA14_65420"/>
<dbReference type="HOGENOM" id="CLU_033617_2_0_6"/>
<dbReference type="BioCyc" id="PAER208963:G1G74-5527-MONOMER"/>
<dbReference type="Proteomes" id="UP000000653">
    <property type="component" value="Chromosome"/>
</dbReference>
<dbReference type="GO" id="GO:0005737">
    <property type="term" value="C:cytoplasm"/>
    <property type="evidence" value="ECO:0007669"/>
    <property type="project" value="UniProtKB-SubCell"/>
</dbReference>
<dbReference type="GO" id="GO:0005525">
    <property type="term" value="F:GTP binding"/>
    <property type="evidence" value="ECO:0007669"/>
    <property type="project" value="UniProtKB-UniRule"/>
</dbReference>
<dbReference type="GO" id="GO:0003924">
    <property type="term" value="F:GTPase activity"/>
    <property type="evidence" value="ECO:0007669"/>
    <property type="project" value="UniProtKB-UniRule"/>
</dbReference>
<dbReference type="GO" id="GO:0046872">
    <property type="term" value="F:metal ion binding"/>
    <property type="evidence" value="ECO:0007669"/>
    <property type="project" value="UniProtKB-KW"/>
</dbReference>
<dbReference type="GO" id="GO:0019843">
    <property type="term" value="F:rRNA binding"/>
    <property type="evidence" value="ECO:0007669"/>
    <property type="project" value="UniProtKB-KW"/>
</dbReference>
<dbReference type="GO" id="GO:0042274">
    <property type="term" value="P:ribosomal small subunit biogenesis"/>
    <property type="evidence" value="ECO:0007669"/>
    <property type="project" value="UniProtKB-UniRule"/>
</dbReference>
<dbReference type="CDD" id="cd01854">
    <property type="entry name" value="YjeQ_EngC"/>
    <property type="match status" value="1"/>
</dbReference>
<dbReference type="Gene3D" id="2.40.50.140">
    <property type="entry name" value="Nucleic acid-binding proteins"/>
    <property type="match status" value="1"/>
</dbReference>
<dbReference type="Gene3D" id="3.40.50.300">
    <property type="entry name" value="P-loop containing nucleotide triphosphate hydrolases"/>
    <property type="match status" value="1"/>
</dbReference>
<dbReference type="Gene3D" id="1.10.40.50">
    <property type="entry name" value="Probable gtpase engc, domain 3"/>
    <property type="match status" value="1"/>
</dbReference>
<dbReference type="HAMAP" id="MF_01820">
    <property type="entry name" value="GTPase_RsgA"/>
    <property type="match status" value="1"/>
</dbReference>
<dbReference type="InterPro" id="IPR030378">
    <property type="entry name" value="G_CP_dom"/>
</dbReference>
<dbReference type="InterPro" id="IPR012340">
    <property type="entry name" value="NA-bd_OB-fold"/>
</dbReference>
<dbReference type="InterPro" id="IPR027417">
    <property type="entry name" value="P-loop_NTPase"/>
</dbReference>
<dbReference type="InterPro" id="IPR004881">
    <property type="entry name" value="Ribosome_biogen_GTPase_RsgA"/>
</dbReference>
<dbReference type="InterPro" id="IPR010914">
    <property type="entry name" value="RsgA_GTPase_dom"/>
</dbReference>
<dbReference type="NCBIfam" id="NF008931">
    <property type="entry name" value="PRK12288.1"/>
    <property type="match status" value="1"/>
</dbReference>
<dbReference type="NCBIfam" id="TIGR00157">
    <property type="entry name" value="ribosome small subunit-dependent GTPase A"/>
    <property type="match status" value="1"/>
</dbReference>
<dbReference type="PANTHER" id="PTHR32120">
    <property type="entry name" value="SMALL RIBOSOMAL SUBUNIT BIOGENESIS GTPASE RSGA"/>
    <property type="match status" value="1"/>
</dbReference>
<dbReference type="PANTHER" id="PTHR32120:SF11">
    <property type="entry name" value="SMALL RIBOSOMAL SUBUNIT BIOGENESIS GTPASE RSGA 1, MITOCHONDRIAL-RELATED"/>
    <property type="match status" value="1"/>
</dbReference>
<dbReference type="Pfam" id="PF03193">
    <property type="entry name" value="RsgA_GTPase"/>
    <property type="match status" value="1"/>
</dbReference>
<dbReference type="SUPFAM" id="SSF50249">
    <property type="entry name" value="Nucleic acid-binding proteins"/>
    <property type="match status" value="1"/>
</dbReference>
<dbReference type="SUPFAM" id="SSF52540">
    <property type="entry name" value="P-loop containing nucleoside triphosphate hydrolases"/>
    <property type="match status" value="1"/>
</dbReference>
<dbReference type="PROSITE" id="PS50936">
    <property type="entry name" value="ENGC_GTPASE"/>
    <property type="match status" value="1"/>
</dbReference>
<dbReference type="PROSITE" id="PS51721">
    <property type="entry name" value="G_CP"/>
    <property type="match status" value="1"/>
</dbReference>
<protein>
    <recommendedName>
        <fullName evidence="1">Small ribosomal subunit biogenesis GTPase RsgA</fullName>
        <ecNumber evidence="1">3.6.1.-</ecNumber>
    </recommendedName>
</protein>
<proteinExistence type="inferred from homology"/>
<feature type="chain" id="PRO_1000188122" description="Small ribosomal subunit biogenesis GTPase RsgA">
    <location>
        <begin position="1"/>
        <end position="339"/>
    </location>
</feature>
<feature type="domain" description="CP-type G" evidence="2">
    <location>
        <begin position="111"/>
        <end position="271"/>
    </location>
</feature>
<feature type="binding site" evidence="1">
    <location>
        <begin position="159"/>
        <end position="162"/>
    </location>
    <ligand>
        <name>GTP</name>
        <dbReference type="ChEBI" id="CHEBI:37565"/>
    </ligand>
</feature>
<feature type="binding site" evidence="1">
    <location>
        <begin position="213"/>
        <end position="221"/>
    </location>
    <ligand>
        <name>GTP</name>
        <dbReference type="ChEBI" id="CHEBI:37565"/>
    </ligand>
</feature>
<feature type="binding site" evidence="1">
    <location>
        <position position="295"/>
    </location>
    <ligand>
        <name>Zn(2+)</name>
        <dbReference type="ChEBI" id="CHEBI:29105"/>
    </ligand>
</feature>
<feature type="binding site" evidence="1">
    <location>
        <position position="300"/>
    </location>
    <ligand>
        <name>Zn(2+)</name>
        <dbReference type="ChEBI" id="CHEBI:29105"/>
    </ligand>
</feature>
<feature type="binding site" evidence="1">
    <location>
        <position position="302"/>
    </location>
    <ligand>
        <name>Zn(2+)</name>
        <dbReference type="ChEBI" id="CHEBI:29105"/>
    </ligand>
</feature>
<feature type="binding site" evidence="1">
    <location>
        <position position="308"/>
    </location>
    <ligand>
        <name>Zn(2+)</name>
        <dbReference type="ChEBI" id="CHEBI:29105"/>
    </ligand>
</feature>
<name>RSGA_PSEAB</name>